<sequence length="417" mass="46861">MCSIVEDDFGDEGGAHAMKEDTPQPELGGNELCRKCNTEQAVLKLNQKEPQCRVCFLNYVRHKFRASLGSTKIVRRGSRVLIILTGEPANVTLLDMVRFGLEQDAFKQLRIVPVLLYVDDDFVGNTSEARLQQLAERLQVFKQFESFPAYYTVCGSSRHVALTFDGAFSPAGFEQDEARLLQVLDAVRSVSSKQDLLEQVRKQTYRQIGHALQCAYVFLSDIGVDLAKTLLSNVALGRGCSLAQDVAFCDDRYNTVKLVRPIRDLNPDEVSNYLQYSEQPLLSYSPAKHFEDKPSLQNLTAKFIDNLMQSFPSTVSTVYRTGDKLDAPKAARNECCRFCGAALDYRGSKTLFATEYSRLVSSRINAACSHEDILLKSKQMELDAERAVNGEDDQGEERVLMKQLCHGCRNIFEDLNK</sequence>
<protein>
    <recommendedName>
        <fullName evidence="1">Cytoplasmic tRNA 2-thiolation protein 2</fullName>
    </recommendedName>
</protein>
<accession>A0NEF7</accession>
<evidence type="ECO:0000255" key="1">
    <source>
        <dbReference type="HAMAP-Rule" id="MF_03054"/>
    </source>
</evidence>
<evidence type="ECO:0000256" key="2">
    <source>
        <dbReference type="SAM" id="MobiDB-lite"/>
    </source>
</evidence>
<proteinExistence type="inferred from homology"/>
<comment type="function">
    <text evidence="1">Plays a central role in 2-thiolation of mcm(5)S(2)U at tRNA wobble positions of tRNA(Lys), tRNA(Glu) and tRNA(Gln). May act by forming a heterodimer with NCS6/CTU1 that ligates sulfur from thiocarboxylated URM1 onto the uridine of tRNAs at wobble position.</text>
</comment>
<comment type="pathway">
    <text evidence="1">tRNA modification; 5-methoxycarbonylmethyl-2-thiouridine-tRNA biosynthesis.</text>
</comment>
<comment type="subcellular location">
    <subcellularLocation>
        <location evidence="1">Cytoplasm</location>
    </subcellularLocation>
</comment>
<comment type="similarity">
    <text evidence="1">Belongs to the CTU2/NCS2 family.</text>
</comment>
<name>CTU2_ANOGA</name>
<gene>
    <name type="ORF">AGAP005651</name>
</gene>
<feature type="chain" id="PRO_0000369268" description="Cytoplasmic tRNA 2-thiolation protein 2">
    <location>
        <begin position="1"/>
        <end position="417"/>
    </location>
</feature>
<feature type="region of interest" description="Disordered" evidence="2">
    <location>
        <begin position="1"/>
        <end position="24"/>
    </location>
</feature>
<feature type="compositionally biased region" description="Acidic residues" evidence="2">
    <location>
        <begin position="1"/>
        <end position="11"/>
    </location>
</feature>
<feature type="compositionally biased region" description="Basic and acidic residues" evidence="2">
    <location>
        <begin position="13"/>
        <end position="22"/>
    </location>
</feature>
<reference key="1">
    <citation type="journal article" date="2002" name="Science">
        <title>The genome sequence of the malaria mosquito Anopheles gambiae.</title>
        <authorList>
            <person name="Holt R.A."/>
            <person name="Subramanian G.M."/>
            <person name="Halpern A."/>
            <person name="Sutton G.G."/>
            <person name="Charlab R."/>
            <person name="Nusskern D.R."/>
            <person name="Wincker P."/>
            <person name="Clark A.G."/>
            <person name="Ribeiro J.M.C."/>
            <person name="Wides R."/>
            <person name="Salzberg S.L."/>
            <person name="Loftus B.J."/>
            <person name="Yandell M.D."/>
            <person name="Majoros W.H."/>
            <person name="Rusch D.B."/>
            <person name="Lai Z."/>
            <person name="Kraft C.L."/>
            <person name="Abril J.F."/>
            <person name="Anthouard V."/>
            <person name="Arensburger P."/>
            <person name="Atkinson P.W."/>
            <person name="Baden H."/>
            <person name="de Berardinis V."/>
            <person name="Baldwin D."/>
            <person name="Benes V."/>
            <person name="Biedler J."/>
            <person name="Blass C."/>
            <person name="Bolanos R."/>
            <person name="Boscus D."/>
            <person name="Barnstead M."/>
            <person name="Cai S."/>
            <person name="Center A."/>
            <person name="Chaturverdi K."/>
            <person name="Christophides G.K."/>
            <person name="Chrystal M.A.M."/>
            <person name="Clamp M."/>
            <person name="Cravchik A."/>
            <person name="Curwen V."/>
            <person name="Dana A."/>
            <person name="Delcher A."/>
            <person name="Dew I."/>
            <person name="Evans C.A."/>
            <person name="Flanigan M."/>
            <person name="Grundschober-Freimoser A."/>
            <person name="Friedli L."/>
            <person name="Gu Z."/>
            <person name="Guan P."/>
            <person name="Guigo R."/>
            <person name="Hillenmeyer M.E."/>
            <person name="Hladun S.L."/>
            <person name="Hogan J.R."/>
            <person name="Hong Y.S."/>
            <person name="Hoover J."/>
            <person name="Jaillon O."/>
            <person name="Ke Z."/>
            <person name="Kodira C.D."/>
            <person name="Kokoza E."/>
            <person name="Koutsos A."/>
            <person name="Letunic I."/>
            <person name="Levitsky A.A."/>
            <person name="Liang Y."/>
            <person name="Lin J.-J."/>
            <person name="Lobo N.F."/>
            <person name="Lopez J.R."/>
            <person name="Malek J.A."/>
            <person name="McIntosh T.C."/>
            <person name="Meister S."/>
            <person name="Miller J.R."/>
            <person name="Mobarry C."/>
            <person name="Mongin E."/>
            <person name="Murphy S.D."/>
            <person name="O'Brochta D.A."/>
            <person name="Pfannkoch C."/>
            <person name="Qi R."/>
            <person name="Regier M.A."/>
            <person name="Remington K."/>
            <person name="Shao H."/>
            <person name="Sharakhova M.V."/>
            <person name="Sitter C.D."/>
            <person name="Shetty J."/>
            <person name="Smith T.J."/>
            <person name="Strong R."/>
            <person name="Sun J."/>
            <person name="Thomasova D."/>
            <person name="Ton L.Q."/>
            <person name="Topalis P."/>
            <person name="Tu Z.J."/>
            <person name="Unger M.F."/>
            <person name="Walenz B."/>
            <person name="Wang A.H."/>
            <person name="Wang J."/>
            <person name="Wang M."/>
            <person name="Wang X."/>
            <person name="Woodford K.J."/>
            <person name="Wortman J.R."/>
            <person name="Wu M."/>
            <person name="Yao A."/>
            <person name="Zdobnov E.M."/>
            <person name="Zhang H."/>
            <person name="Zhao Q."/>
            <person name="Zhao S."/>
            <person name="Zhu S.C."/>
            <person name="Zhimulev I."/>
            <person name="Coluzzi M."/>
            <person name="della Torre A."/>
            <person name="Roth C.W."/>
            <person name="Louis C."/>
            <person name="Kalush F."/>
            <person name="Mural R.J."/>
            <person name="Myers E.W."/>
            <person name="Adams M.D."/>
            <person name="Smith H.O."/>
            <person name="Broder S."/>
            <person name="Gardner M.J."/>
            <person name="Fraser C.M."/>
            <person name="Birney E."/>
            <person name="Bork P."/>
            <person name="Brey P.T."/>
            <person name="Venter J.C."/>
            <person name="Weissenbach J."/>
            <person name="Kafatos F.C."/>
            <person name="Collins F.H."/>
            <person name="Hoffman S.L."/>
        </authorList>
    </citation>
    <scope>NUCLEOTIDE SEQUENCE [LARGE SCALE GENOMIC DNA]</scope>
    <source>
        <strain>PEST</strain>
    </source>
</reference>
<dbReference type="EMBL" id="AAAB01008960">
    <property type="protein sequence ID" value="EAU76478.2"/>
    <property type="molecule type" value="Genomic_DNA"/>
</dbReference>
<dbReference type="RefSeq" id="XP_001237692.2">
    <property type="nucleotide sequence ID" value="XM_001237691.2"/>
</dbReference>
<dbReference type="SMR" id="A0NEF7"/>
<dbReference type="FunCoup" id="A0NEF7">
    <property type="interactions" value="1925"/>
</dbReference>
<dbReference type="STRING" id="7165.A0NEF7"/>
<dbReference type="PaxDb" id="7165-AGAP005651-PA"/>
<dbReference type="VEuPathDB" id="VectorBase:AGAMI1_013075"/>
<dbReference type="VEuPathDB" id="VectorBase:AGAP005651"/>
<dbReference type="eggNOG" id="KOG2594">
    <property type="taxonomic scope" value="Eukaryota"/>
</dbReference>
<dbReference type="HOGENOM" id="CLU_024534_2_1_1"/>
<dbReference type="InParanoid" id="A0NEF7"/>
<dbReference type="OMA" id="CHACRNI"/>
<dbReference type="PhylomeDB" id="A0NEF7"/>
<dbReference type="UniPathway" id="UPA00988"/>
<dbReference type="Proteomes" id="UP000007062">
    <property type="component" value="Chromosome 2L"/>
</dbReference>
<dbReference type="GO" id="GO:0005829">
    <property type="term" value="C:cytosol"/>
    <property type="evidence" value="ECO:0000250"/>
    <property type="project" value="UniProtKB"/>
</dbReference>
<dbReference type="GO" id="GO:0016779">
    <property type="term" value="F:nucleotidyltransferase activity"/>
    <property type="evidence" value="ECO:0007669"/>
    <property type="project" value="UniProtKB-UniRule"/>
</dbReference>
<dbReference type="GO" id="GO:0016783">
    <property type="term" value="F:sulfurtransferase activity"/>
    <property type="evidence" value="ECO:0000318"/>
    <property type="project" value="GO_Central"/>
</dbReference>
<dbReference type="GO" id="GO:0000049">
    <property type="term" value="F:tRNA binding"/>
    <property type="evidence" value="ECO:0007669"/>
    <property type="project" value="InterPro"/>
</dbReference>
<dbReference type="GO" id="GO:0032447">
    <property type="term" value="P:protein urmylation"/>
    <property type="evidence" value="ECO:0007669"/>
    <property type="project" value="UniProtKB-UniRule"/>
</dbReference>
<dbReference type="GO" id="GO:0034227">
    <property type="term" value="P:tRNA thio-modification"/>
    <property type="evidence" value="ECO:0000250"/>
    <property type="project" value="UniProtKB"/>
</dbReference>
<dbReference type="GO" id="GO:0002143">
    <property type="term" value="P:tRNA wobble position uridine thiolation"/>
    <property type="evidence" value="ECO:0000318"/>
    <property type="project" value="GO_Central"/>
</dbReference>
<dbReference type="GO" id="GO:0002098">
    <property type="term" value="P:tRNA wobble uridine modification"/>
    <property type="evidence" value="ECO:0000250"/>
    <property type="project" value="UniProtKB"/>
</dbReference>
<dbReference type="FunFam" id="3.40.50.620:FF:000229">
    <property type="entry name" value="Cytoplasmic tRNA 2-thiolation protein 2"/>
    <property type="match status" value="1"/>
</dbReference>
<dbReference type="Gene3D" id="3.40.50.620">
    <property type="entry name" value="HUPs"/>
    <property type="match status" value="1"/>
</dbReference>
<dbReference type="HAMAP" id="MF_03054">
    <property type="entry name" value="CTU2"/>
    <property type="match status" value="1"/>
</dbReference>
<dbReference type="InterPro" id="IPR019407">
    <property type="entry name" value="CTU2"/>
</dbReference>
<dbReference type="InterPro" id="IPR014729">
    <property type="entry name" value="Rossmann-like_a/b/a_fold"/>
</dbReference>
<dbReference type="PANTHER" id="PTHR20882">
    <property type="entry name" value="CYTOPLASMIC TRNA 2-THIOLATION PROTEIN 2"/>
    <property type="match status" value="1"/>
</dbReference>
<dbReference type="PANTHER" id="PTHR20882:SF14">
    <property type="entry name" value="CYTOPLASMIC TRNA 2-THIOLATION PROTEIN 2"/>
    <property type="match status" value="1"/>
</dbReference>
<dbReference type="Pfam" id="PF10288">
    <property type="entry name" value="CTU2"/>
    <property type="match status" value="1"/>
</dbReference>
<keyword id="KW-0963">Cytoplasm</keyword>
<keyword id="KW-1185">Reference proteome</keyword>
<keyword id="KW-0819">tRNA processing</keyword>
<organism>
    <name type="scientific">Anopheles gambiae</name>
    <name type="common">African malaria mosquito</name>
    <dbReference type="NCBI Taxonomy" id="7165"/>
    <lineage>
        <taxon>Eukaryota</taxon>
        <taxon>Metazoa</taxon>
        <taxon>Ecdysozoa</taxon>
        <taxon>Arthropoda</taxon>
        <taxon>Hexapoda</taxon>
        <taxon>Insecta</taxon>
        <taxon>Pterygota</taxon>
        <taxon>Neoptera</taxon>
        <taxon>Endopterygota</taxon>
        <taxon>Diptera</taxon>
        <taxon>Nematocera</taxon>
        <taxon>Culicoidea</taxon>
        <taxon>Culicidae</taxon>
        <taxon>Anophelinae</taxon>
        <taxon>Anopheles</taxon>
    </lineage>
</organism>